<proteinExistence type="inferred from homology"/>
<organism>
    <name type="scientific">Methanococcus maripaludis (strain DSM 14266 / JCM 13030 / NBRC 101832 / S2 / LL)</name>
    <dbReference type="NCBI Taxonomy" id="267377"/>
    <lineage>
        <taxon>Archaea</taxon>
        <taxon>Methanobacteriati</taxon>
        <taxon>Methanobacteriota</taxon>
        <taxon>Methanomada group</taxon>
        <taxon>Methanococci</taxon>
        <taxon>Methanococcales</taxon>
        <taxon>Methanococcaceae</taxon>
        <taxon>Methanococcus</taxon>
    </lineage>
</organism>
<keyword id="KW-0012">Acyltransferase</keyword>
<keyword id="KW-0511">Multifunctional enzyme</keyword>
<keyword id="KW-0548">Nucleotidyltransferase</keyword>
<keyword id="KW-1185">Reference proteome</keyword>
<keyword id="KW-0677">Repeat</keyword>
<keyword id="KW-0808">Transferase</keyword>
<reference key="1">
    <citation type="journal article" date="2004" name="J. Bacteriol.">
        <title>Complete genome sequence of the genetically tractable hydrogenotrophic methanogen Methanococcus maripaludis.</title>
        <authorList>
            <person name="Hendrickson E.L."/>
            <person name="Kaul R."/>
            <person name="Zhou Y."/>
            <person name="Bovee D."/>
            <person name="Chapman P."/>
            <person name="Chung J."/>
            <person name="Conway de Macario E."/>
            <person name="Dodsworth J.A."/>
            <person name="Gillett W."/>
            <person name="Graham D.E."/>
            <person name="Hackett M."/>
            <person name="Haydock A.K."/>
            <person name="Kang A."/>
            <person name="Land M.L."/>
            <person name="Levy R."/>
            <person name="Lie T.J."/>
            <person name="Major T.A."/>
            <person name="Moore B.C."/>
            <person name="Porat I."/>
            <person name="Palmeiri A."/>
            <person name="Rouse G."/>
            <person name="Saenphimmachak C."/>
            <person name="Soell D."/>
            <person name="Van Dien S."/>
            <person name="Wang T."/>
            <person name="Whitman W.B."/>
            <person name="Xia Q."/>
            <person name="Zhang Y."/>
            <person name="Larimer F.W."/>
            <person name="Olson M.V."/>
            <person name="Leigh J.A."/>
        </authorList>
    </citation>
    <scope>NUCLEOTIDE SEQUENCE [LARGE SCALE GENOMIC DNA]</scope>
    <source>
        <strain>DSM 14266 / JCM 13030 / NBRC 101832 / S2 / LL</strain>
    </source>
</reference>
<evidence type="ECO:0000250" key="1"/>
<evidence type="ECO:0000305" key="2"/>
<accession>Q6LYB5</accession>
<protein>
    <recommendedName>
        <fullName>Bifunctional protein GlmU</fullName>
    </recommendedName>
    <domain>
        <recommendedName>
            <fullName>UDP-N-acetylglucosamine pyrophosphorylase</fullName>
            <ecNumber>2.7.7.23</ecNumber>
        </recommendedName>
        <alternativeName>
            <fullName>N-acetylglucosamine-1-phosphate uridyltransferase</fullName>
        </alternativeName>
    </domain>
    <domain>
        <recommendedName>
            <fullName>Glucosamine-1-phosphate N-acetyltransferase</fullName>
            <ecNumber>2.3.1.157</ecNumber>
        </recommendedName>
    </domain>
</protein>
<sequence>MDAIILCAGKGTRLHPITESRPKPMIPIAGKPIIEHIIEKIENHVEKIYLIVGYQKEKIIDYFKDNPKIEYILQEKQLGTGHAVLTAKNFIKGDFLVLNGDVIFEDSIDEILNYENAVSLSNVDNPENFGVIELGYDNKIINLLEKPKKEEITSNLINAGIYKLQNSVFGILENLAPSERGEIELTDALKKLIENGKLHGVELKGYWNDIGHPWDVLSANNHFLNKIISKVSGKIENTVSITGNVIIEEGAVIKPNSVIEGPAIIKSGSIVGPLAYVRPNTVLMKNTFVGNSSEIKGSIIFENTKIPHLSYVGDSIIGANCNFGCNTITANLRFDDKPVIVNIKGKPVKSVRKLGAIIGDCVKTGIQVSFMPGVKIGSNSLIGANCLIDRDIEQESFVYKKDELVITKKRN</sequence>
<dbReference type="EC" id="2.7.7.23"/>
<dbReference type="EC" id="2.3.1.157"/>
<dbReference type="EMBL" id="BX950229">
    <property type="protein sequence ID" value="CAF30632.1"/>
    <property type="molecule type" value="Genomic_DNA"/>
</dbReference>
<dbReference type="RefSeq" id="WP_011171020.1">
    <property type="nucleotide sequence ID" value="NC_005791.1"/>
</dbReference>
<dbReference type="SMR" id="Q6LYB5"/>
<dbReference type="STRING" id="267377.MMP1076"/>
<dbReference type="EnsemblBacteria" id="CAF30632">
    <property type="protein sequence ID" value="CAF30632"/>
    <property type="gene ID" value="MMP1076"/>
</dbReference>
<dbReference type="GeneID" id="2761822"/>
<dbReference type="KEGG" id="mmp:MMP1076"/>
<dbReference type="PATRIC" id="fig|267377.15.peg.1109"/>
<dbReference type="eggNOG" id="arCOG00666">
    <property type="taxonomic scope" value="Archaea"/>
</dbReference>
<dbReference type="HOGENOM" id="CLU_029499_0_1_2"/>
<dbReference type="OrthoDB" id="15372at2157"/>
<dbReference type="UniPathway" id="UPA00113">
    <property type="reaction ID" value="UER00532"/>
</dbReference>
<dbReference type="UniPathway" id="UPA00113">
    <property type="reaction ID" value="UER00533"/>
</dbReference>
<dbReference type="Proteomes" id="UP000000590">
    <property type="component" value="Chromosome"/>
</dbReference>
<dbReference type="GO" id="GO:0019134">
    <property type="term" value="F:glucosamine-1-phosphate N-acetyltransferase activity"/>
    <property type="evidence" value="ECO:0007669"/>
    <property type="project" value="UniProtKB-EC"/>
</dbReference>
<dbReference type="GO" id="GO:0003977">
    <property type="term" value="F:UDP-N-acetylglucosamine diphosphorylase activity"/>
    <property type="evidence" value="ECO:0007669"/>
    <property type="project" value="UniProtKB-EC"/>
</dbReference>
<dbReference type="GO" id="GO:0006048">
    <property type="term" value="P:UDP-N-acetylglucosamine biosynthetic process"/>
    <property type="evidence" value="ECO:0007669"/>
    <property type="project" value="UniProtKB-UniPathway"/>
</dbReference>
<dbReference type="CDD" id="cd05636">
    <property type="entry name" value="LbH_G1P_TT_C_like"/>
    <property type="match status" value="1"/>
</dbReference>
<dbReference type="CDD" id="cd04181">
    <property type="entry name" value="NTP_transferase"/>
    <property type="match status" value="1"/>
</dbReference>
<dbReference type="Gene3D" id="2.160.10.10">
    <property type="entry name" value="Hexapeptide repeat proteins"/>
    <property type="match status" value="1"/>
</dbReference>
<dbReference type="Gene3D" id="3.90.550.10">
    <property type="entry name" value="Spore Coat Polysaccharide Biosynthesis Protein SpsA, Chain A"/>
    <property type="match status" value="1"/>
</dbReference>
<dbReference type="InterPro" id="IPR023915">
    <property type="entry name" value="Bifunctiontional_GlmU_arc-type"/>
</dbReference>
<dbReference type="InterPro" id="IPR050065">
    <property type="entry name" value="GlmU-like"/>
</dbReference>
<dbReference type="InterPro" id="IPR001451">
    <property type="entry name" value="Hexapep"/>
</dbReference>
<dbReference type="InterPro" id="IPR005835">
    <property type="entry name" value="NTP_transferase_dom"/>
</dbReference>
<dbReference type="InterPro" id="IPR029044">
    <property type="entry name" value="Nucleotide-diphossugar_trans"/>
</dbReference>
<dbReference type="InterPro" id="IPR011004">
    <property type="entry name" value="Trimer_LpxA-like_sf"/>
</dbReference>
<dbReference type="NCBIfam" id="TIGR03992">
    <property type="entry name" value="Arch_glmU"/>
    <property type="match status" value="1"/>
</dbReference>
<dbReference type="PANTHER" id="PTHR43584:SF8">
    <property type="entry name" value="N-ACETYLMURAMATE ALPHA-1-PHOSPHATE URIDYLYLTRANSFERASE"/>
    <property type="match status" value="1"/>
</dbReference>
<dbReference type="PANTHER" id="PTHR43584">
    <property type="entry name" value="NUCLEOTIDYL TRANSFERASE"/>
    <property type="match status" value="1"/>
</dbReference>
<dbReference type="Pfam" id="PF00132">
    <property type="entry name" value="Hexapep"/>
    <property type="match status" value="1"/>
</dbReference>
<dbReference type="Pfam" id="PF00483">
    <property type="entry name" value="NTP_transferase"/>
    <property type="match status" value="1"/>
</dbReference>
<dbReference type="SUPFAM" id="SSF53448">
    <property type="entry name" value="Nucleotide-diphospho-sugar transferases"/>
    <property type="match status" value="1"/>
</dbReference>
<dbReference type="SUPFAM" id="SSF51161">
    <property type="entry name" value="Trimeric LpxA-like enzymes"/>
    <property type="match status" value="1"/>
</dbReference>
<gene>
    <name type="ordered locus">MMP1076</name>
</gene>
<comment type="function">
    <text evidence="1">Catalyzes the last two sequential reactions in the de novo biosynthetic pathway for UDP-N-acetyl-glucosamine (UDP-GlcNAc). Responsible for the acetylation of GlcN-1-P to GlcNAc-1-P, and for the uridyl transfer from UTP to GlcNAc-1-P, to produce UDP-GlcNAc and pyrophosphate (By similarity).</text>
</comment>
<comment type="catalytic activity">
    <reaction>
        <text>N-acetyl-alpha-D-glucosamine 1-phosphate + UTP + H(+) = UDP-N-acetyl-alpha-D-glucosamine + diphosphate</text>
        <dbReference type="Rhea" id="RHEA:13509"/>
        <dbReference type="ChEBI" id="CHEBI:15378"/>
        <dbReference type="ChEBI" id="CHEBI:33019"/>
        <dbReference type="ChEBI" id="CHEBI:46398"/>
        <dbReference type="ChEBI" id="CHEBI:57705"/>
        <dbReference type="ChEBI" id="CHEBI:57776"/>
        <dbReference type="EC" id="2.7.7.23"/>
    </reaction>
</comment>
<comment type="catalytic activity">
    <reaction>
        <text>alpha-D-glucosamine 1-phosphate + acetyl-CoA = N-acetyl-alpha-D-glucosamine 1-phosphate + CoA + H(+)</text>
        <dbReference type="Rhea" id="RHEA:13725"/>
        <dbReference type="ChEBI" id="CHEBI:15378"/>
        <dbReference type="ChEBI" id="CHEBI:57287"/>
        <dbReference type="ChEBI" id="CHEBI:57288"/>
        <dbReference type="ChEBI" id="CHEBI:57776"/>
        <dbReference type="ChEBI" id="CHEBI:58516"/>
        <dbReference type="EC" id="2.3.1.157"/>
    </reaction>
</comment>
<comment type="pathway">
    <text>Nucleotide-sugar biosynthesis; UDP-N-acetyl-alpha-D-glucosamine biosynthesis; N-acetyl-alpha-D-glucosamine 1-phosphate from alpha-D-glucosamine 6-phosphate (route II): step 2/2.</text>
</comment>
<comment type="pathway">
    <text>Nucleotide-sugar biosynthesis; UDP-N-acetyl-alpha-D-glucosamine biosynthesis; UDP-N-acetyl-alpha-D-glucosamine from N-acetyl-alpha-D-glucosamine 1-phosphate: step 1/1.</text>
</comment>
<comment type="similarity">
    <text evidence="2">In the N-terminal section; belongs to the N-acetylglucosamine-1-phosphate uridyltransferase family.</text>
</comment>
<comment type="similarity">
    <text evidence="2">In the C-terminal section; belongs to the transferase hexapeptide repeat family.</text>
</comment>
<feature type="chain" id="PRO_0000337831" description="Bifunctional protein GlmU">
    <location>
        <begin position="1"/>
        <end position="411"/>
    </location>
</feature>
<feature type="region of interest" description="Pyrophosphorylase">
    <location>
        <begin position="1"/>
        <end position="204"/>
    </location>
</feature>
<feature type="region of interest" description="Linker">
    <location>
        <begin position="205"/>
        <end position="224"/>
    </location>
</feature>
<feature type="region of interest" description="N-acetyltransferase">
    <location>
        <begin position="225"/>
        <end position="411"/>
    </location>
</feature>
<feature type="active site" description="Proton acceptor" evidence="1">
    <location>
        <position position="308"/>
    </location>
</feature>
<feature type="binding site" evidence="1">
    <location>
        <begin position="6"/>
        <end position="9"/>
    </location>
    <ligand>
        <name>UTP</name>
        <dbReference type="ChEBI" id="CHEBI:46398"/>
    </ligand>
</feature>
<feature type="binding site" evidence="1">
    <location>
        <position position="74"/>
    </location>
    <ligand>
        <name>UTP</name>
        <dbReference type="ChEBI" id="CHEBI:46398"/>
    </ligand>
</feature>
<feature type="binding site" evidence="1">
    <location>
        <position position="79"/>
    </location>
    <ligand>
        <name>UTP</name>
        <dbReference type="ChEBI" id="CHEBI:46398"/>
    </ligand>
</feature>
<feature type="binding site" evidence="1">
    <location>
        <position position="80"/>
    </location>
    <ligand>
        <name>N-acetyl-alpha-D-glucosamine 1-phosphate</name>
        <dbReference type="ChEBI" id="CHEBI:57776"/>
    </ligand>
</feature>
<feature type="binding site" evidence="1">
    <location>
        <position position="130"/>
    </location>
    <ligand>
        <name>N-acetyl-alpha-D-glucosamine 1-phosphate</name>
        <dbReference type="ChEBI" id="CHEBI:57776"/>
    </ligand>
</feature>
<feature type="binding site" evidence="1">
    <location>
        <position position="142"/>
    </location>
    <ligand>
        <name>N-acetyl-alpha-D-glucosamine 1-phosphate</name>
        <dbReference type="ChEBI" id="CHEBI:57776"/>
    </ligand>
</feature>
<feature type="binding site" evidence="1">
    <location>
        <position position="158"/>
    </location>
    <ligand>
        <name>N-acetyl-alpha-D-glucosamine 1-phosphate</name>
        <dbReference type="ChEBI" id="CHEBI:57776"/>
    </ligand>
</feature>
<feature type="binding site" evidence="1">
    <location>
        <position position="384"/>
    </location>
    <ligand>
        <name>acetyl-CoA</name>
        <dbReference type="ChEBI" id="CHEBI:57288"/>
    </ligand>
</feature>
<feature type="binding site" evidence="1">
    <location>
        <position position="401"/>
    </location>
    <ligand>
        <name>acetyl-CoA</name>
        <dbReference type="ChEBI" id="CHEBI:57288"/>
    </ligand>
</feature>
<name>GLMU_METMP</name>